<proteinExistence type="inferred from homology"/>
<feature type="chain" id="PRO_0000098617" description="5-methyltetrahydropteroyltriglutamate--homocysteine methyltransferase">
    <location>
        <begin position="1"/>
        <end position="764"/>
    </location>
</feature>
<feature type="active site" description="Proton donor" evidence="1">
    <location>
        <position position="705"/>
    </location>
</feature>
<feature type="binding site" evidence="1">
    <location>
        <begin position="16"/>
        <end position="19"/>
    </location>
    <ligand>
        <name>5-methyltetrahydropteroyltri-L-glutamate</name>
        <dbReference type="ChEBI" id="CHEBI:58207"/>
    </ligand>
</feature>
<feature type="binding site" evidence="1">
    <location>
        <position position="117"/>
    </location>
    <ligand>
        <name>5-methyltetrahydropteroyltri-L-glutamate</name>
        <dbReference type="ChEBI" id="CHEBI:58207"/>
    </ligand>
</feature>
<feature type="binding site" evidence="1">
    <location>
        <begin position="442"/>
        <end position="444"/>
    </location>
    <ligand>
        <name>L-homocysteine</name>
        <dbReference type="ChEBI" id="CHEBI:58199"/>
    </ligand>
</feature>
<feature type="binding site" evidence="1">
    <location>
        <begin position="442"/>
        <end position="444"/>
    </location>
    <ligand>
        <name>L-methionine</name>
        <dbReference type="ChEBI" id="CHEBI:57844"/>
    </ligand>
</feature>
<feature type="binding site" evidence="1">
    <location>
        <position position="495"/>
    </location>
    <ligand>
        <name>L-homocysteine</name>
        <dbReference type="ChEBI" id="CHEBI:58199"/>
    </ligand>
</feature>
<feature type="binding site" evidence="1">
    <location>
        <position position="495"/>
    </location>
    <ligand>
        <name>L-methionine</name>
        <dbReference type="ChEBI" id="CHEBI:57844"/>
    </ligand>
</feature>
<feature type="binding site" evidence="1">
    <location>
        <begin position="526"/>
        <end position="527"/>
    </location>
    <ligand>
        <name>5-methyltetrahydropteroyltri-L-glutamate</name>
        <dbReference type="ChEBI" id="CHEBI:58207"/>
    </ligand>
</feature>
<feature type="binding site" evidence="1">
    <location>
        <position position="572"/>
    </location>
    <ligand>
        <name>5-methyltetrahydropteroyltri-L-glutamate</name>
        <dbReference type="ChEBI" id="CHEBI:58207"/>
    </ligand>
</feature>
<feature type="binding site" evidence="1">
    <location>
        <position position="610"/>
    </location>
    <ligand>
        <name>L-homocysteine</name>
        <dbReference type="ChEBI" id="CHEBI:58199"/>
    </ligand>
</feature>
<feature type="binding site" evidence="1">
    <location>
        <position position="610"/>
    </location>
    <ligand>
        <name>L-methionine</name>
        <dbReference type="ChEBI" id="CHEBI:57844"/>
    </ligand>
</feature>
<feature type="binding site" evidence="1">
    <location>
        <position position="616"/>
    </location>
    <ligand>
        <name>5-methyltetrahydropteroyltri-L-glutamate</name>
        <dbReference type="ChEBI" id="CHEBI:58207"/>
    </ligand>
</feature>
<feature type="binding site" evidence="1">
    <location>
        <position position="652"/>
    </location>
    <ligand>
        <name>Zn(2+)</name>
        <dbReference type="ChEBI" id="CHEBI:29105"/>
        <note>catalytic</note>
    </ligand>
</feature>
<feature type="binding site" evidence="1">
    <location>
        <position position="654"/>
    </location>
    <ligand>
        <name>Zn(2+)</name>
        <dbReference type="ChEBI" id="CHEBI:29105"/>
        <note>catalytic</note>
    </ligand>
</feature>
<feature type="binding site" evidence="1">
    <location>
        <position position="676"/>
    </location>
    <ligand>
        <name>Zn(2+)</name>
        <dbReference type="ChEBI" id="CHEBI:29105"/>
        <note>catalytic</note>
    </ligand>
</feature>
<feature type="binding site" evidence="1">
    <location>
        <position position="737"/>
    </location>
    <ligand>
        <name>Zn(2+)</name>
        <dbReference type="ChEBI" id="CHEBI:29105"/>
        <note>catalytic</note>
    </ligand>
</feature>
<sequence>MTIIHNLGFPRIGAQRELKRAVEAYWAGRQTAEALHETGRALRAAHWQRQADAGVAFVPVGDFAWYDHILEWTTLLGAVPARFGHPEGKPVDLDTLFRMGRGRAPSGKPAAACEMTKWFDTNYHYIVPELTPGQTFRVAREDLFEQVKEAQALGHRVKPVIPGPLTWLWLGKGDAFAQGAGDIGKLQLLDALLPVYGEVLERLAGLGVEWVQIDEPALVLDLPQAWRDAYQAVYAKLAASPVKLLLATYFDGLKDNLATALALPVAGLHVDLVRAPDQLSDVASGLRPGQVLSAGVINGRNIWRTDLDAALAMLVPVREQLQERLWLAPSCSLLHVPVDLAGETELDAELLGWLSFAVQKLDELCLLGKALGGDADPAVQQGLAAQRAALQARRQSPRIHNPAVAQRMAGQAGVSRERAPFGQRIARQQSELRLPAFPTTTIGSFPQTAEIRALRRDWKSGALTDSAYENAIRKEIEEVIRFQEKVGLDVLVHGEPERNDMVEYFGELLAGFAFTKNGWVQSYGSRCVKPPIIFGDVARPAPMTVGWSAYAQSLTDKPVKGMLTGPVTILQWSFVRDDQPREATCRQLALALRDEVVDLEAAGIRVIQIDEPAIREGLPLRRADWRAYLDWAVDCFRLSTAGVGEATQIHTHMCYSEFNDIIESIAAMDADVITIETSRSNMELLKAFEDFHYPNDIGPGVYDIHSPNVPEVDWMVELMRKAAARLPKERLWVNPDCGLKTRAWPETEAALIGMVQAARTLRAA</sequence>
<protein>
    <recommendedName>
        <fullName evidence="1">5-methyltetrahydropteroyltriglutamate--homocysteine methyltransferase</fullName>
        <ecNumber evidence="1">2.1.1.14</ecNumber>
    </recommendedName>
    <alternativeName>
        <fullName evidence="1">Cobalamin-independent methionine synthase</fullName>
    </alternativeName>
    <alternativeName>
        <fullName evidence="1">Methionine synthase, vitamin-B12 independent isozyme</fullName>
    </alternativeName>
</protein>
<gene>
    <name evidence="1" type="primary">metE</name>
    <name type="ordered locus">BP2543</name>
</gene>
<name>METE_BORPE</name>
<keyword id="KW-0028">Amino-acid biosynthesis</keyword>
<keyword id="KW-0479">Metal-binding</keyword>
<keyword id="KW-0486">Methionine biosynthesis</keyword>
<keyword id="KW-0489">Methyltransferase</keyword>
<keyword id="KW-1185">Reference proteome</keyword>
<keyword id="KW-0677">Repeat</keyword>
<keyword id="KW-0808">Transferase</keyword>
<keyword id="KW-0862">Zinc</keyword>
<dbReference type="EC" id="2.1.1.14" evidence="1"/>
<dbReference type="EMBL" id="BX640418">
    <property type="protein sequence ID" value="CAE42818.1"/>
    <property type="molecule type" value="Genomic_DNA"/>
</dbReference>
<dbReference type="RefSeq" id="NP_881170.1">
    <property type="nucleotide sequence ID" value="NC_002929.2"/>
</dbReference>
<dbReference type="RefSeq" id="WP_010930989.1">
    <property type="nucleotide sequence ID" value="NZ_CP039022.1"/>
</dbReference>
<dbReference type="SMR" id="Q7VVU3"/>
<dbReference type="STRING" id="257313.BP2543"/>
<dbReference type="PaxDb" id="257313-BP2543"/>
<dbReference type="GeneID" id="69602444"/>
<dbReference type="KEGG" id="bpe:BP2543"/>
<dbReference type="PATRIC" id="fig|257313.5.peg.2743"/>
<dbReference type="eggNOG" id="COG0620">
    <property type="taxonomic scope" value="Bacteria"/>
</dbReference>
<dbReference type="HOGENOM" id="CLU_013175_0_0_4"/>
<dbReference type="UniPathway" id="UPA00051">
    <property type="reaction ID" value="UER00082"/>
</dbReference>
<dbReference type="Proteomes" id="UP000002676">
    <property type="component" value="Chromosome"/>
</dbReference>
<dbReference type="GO" id="GO:0003871">
    <property type="term" value="F:5-methyltetrahydropteroyltriglutamate-homocysteine S-methyltransferase activity"/>
    <property type="evidence" value="ECO:0007669"/>
    <property type="project" value="UniProtKB-UniRule"/>
</dbReference>
<dbReference type="GO" id="GO:0008270">
    <property type="term" value="F:zinc ion binding"/>
    <property type="evidence" value="ECO:0007669"/>
    <property type="project" value="InterPro"/>
</dbReference>
<dbReference type="GO" id="GO:0009086">
    <property type="term" value="P:methionine biosynthetic process"/>
    <property type="evidence" value="ECO:0007669"/>
    <property type="project" value="UniProtKB-UniRule"/>
</dbReference>
<dbReference type="GO" id="GO:0032259">
    <property type="term" value="P:methylation"/>
    <property type="evidence" value="ECO:0007669"/>
    <property type="project" value="UniProtKB-KW"/>
</dbReference>
<dbReference type="CDD" id="cd03311">
    <property type="entry name" value="CIMS_C_terminal_like"/>
    <property type="match status" value="1"/>
</dbReference>
<dbReference type="CDD" id="cd03312">
    <property type="entry name" value="CIMS_N_terminal_like"/>
    <property type="match status" value="1"/>
</dbReference>
<dbReference type="FunFam" id="3.20.20.210:FF:000002">
    <property type="entry name" value="5-methyltetrahydropteroyltriglutamate--homocysteine methyltransferase"/>
    <property type="match status" value="1"/>
</dbReference>
<dbReference type="FunFam" id="3.20.20.210:FF:000003">
    <property type="entry name" value="5-methyltetrahydropteroyltriglutamate--homocysteine methyltransferase"/>
    <property type="match status" value="1"/>
</dbReference>
<dbReference type="Gene3D" id="3.20.20.210">
    <property type="match status" value="2"/>
</dbReference>
<dbReference type="HAMAP" id="MF_00172">
    <property type="entry name" value="Meth_synth"/>
    <property type="match status" value="1"/>
</dbReference>
<dbReference type="InterPro" id="IPR013215">
    <property type="entry name" value="Cbl-indep_Met_Synth_N"/>
</dbReference>
<dbReference type="InterPro" id="IPR006276">
    <property type="entry name" value="Cobalamin-indep_Met_synthase"/>
</dbReference>
<dbReference type="InterPro" id="IPR002629">
    <property type="entry name" value="Met_Synth_C/arc"/>
</dbReference>
<dbReference type="InterPro" id="IPR038071">
    <property type="entry name" value="UROD/MetE-like_sf"/>
</dbReference>
<dbReference type="NCBIfam" id="TIGR01371">
    <property type="entry name" value="met_syn_B12ind"/>
    <property type="match status" value="1"/>
</dbReference>
<dbReference type="NCBIfam" id="NF003556">
    <property type="entry name" value="PRK05222.1"/>
    <property type="match status" value="1"/>
</dbReference>
<dbReference type="PANTHER" id="PTHR30519">
    <property type="entry name" value="5-METHYLTETRAHYDROPTEROYLTRIGLUTAMATE--HOMOCYSTEINE METHYLTRANSFERASE"/>
    <property type="match status" value="1"/>
</dbReference>
<dbReference type="Pfam" id="PF08267">
    <property type="entry name" value="Meth_synt_1"/>
    <property type="match status" value="1"/>
</dbReference>
<dbReference type="Pfam" id="PF01717">
    <property type="entry name" value="Meth_synt_2"/>
    <property type="match status" value="1"/>
</dbReference>
<dbReference type="PIRSF" id="PIRSF000382">
    <property type="entry name" value="MeTrfase_B12_ind"/>
    <property type="match status" value="1"/>
</dbReference>
<dbReference type="SUPFAM" id="SSF51726">
    <property type="entry name" value="UROD/MetE-like"/>
    <property type="match status" value="2"/>
</dbReference>
<reference key="1">
    <citation type="journal article" date="2003" name="Nat. Genet.">
        <title>Comparative analysis of the genome sequences of Bordetella pertussis, Bordetella parapertussis and Bordetella bronchiseptica.</title>
        <authorList>
            <person name="Parkhill J."/>
            <person name="Sebaihia M."/>
            <person name="Preston A."/>
            <person name="Murphy L.D."/>
            <person name="Thomson N.R."/>
            <person name="Harris D.E."/>
            <person name="Holden M.T.G."/>
            <person name="Churcher C.M."/>
            <person name="Bentley S.D."/>
            <person name="Mungall K.L."/>
            <person name="Cerdeno-Tarraga A.-M."/>
            <person name="Temple L."/>
            <person name="James K.D."/>
            <person name="Harris B."/>
            <person name="Quail M.A."/>
            <person name="Achtman M."/>
            <person name="Atkin R."/>
            <person name="Baker S."/>
            <person name="Basham D."/>
            <person name="Bason N."/>
            <person name="Cherevach I."/>
            <person name="Chillingworth T."/>
            <person name="Collins M."/>
            <person name="Cronin A."/>
            <person name="Davis P."/>
            <person name="Doggett J."/>
            <person name="Feltwell T."/>
            <person name="Goble A."/>
            <person name="Hamlin N."/>
            <person name="Hauser H."/>
            <person name="Holroyd S."/>
            <person name="Jagels K."/>
            <person name="Leather S."/>
            <person name="Moule S."/>
            <person name="Norberczak H."/>
            <person name="O'Neil S."/>
            <person name="Ormond D."/>
            <person name="Price C."/>
            <person name="Rabbinowitsch E."/>
            <person name="Rutter S."/>
            <person name="Sanders M."/>
            <person name="Saunders D."/>
            <person name="Seeger K."/>
            <person name="Sharp S."/>
            <person name="Simmonds M."/>
            <person name="Skelton J."/>
            <person name="Squares R."/>
            <person name="Squares S."/>
            <person name="Stevens K."/>
            <person name="Unwin L."/>
            <person name="Whitehead S."/>
            <person name="Barrell B.G."/>
            <person name="Maskell D.J."/>
        </authorList>
    </citation>
    <scope>NUCLEOTIDE SEQUENCE [LARGE SCALE GENOMIC DNA]</scope>
    <source>
        <strain>Tohama I / ATCC BAA-589 / NCTC 13251</strain>
    </source>
</reference>
<comment type="function">
    <text evidence="1">Catalyzes the transfer of a methyl group from 5-methyltetrahydrofolate to homocysteine resulting in methionine formation.</text>
</comment>
<comment type="catalytic activity">
    <reaction evidence="1">
        <text>5-methyltetrahydropteroyltri-L-glutamate + L-homocysteine = tetrahydropteroyltri-L-glutamate + L-methionine</text>
        <dbReference type="Rhea" id="RHEA:21196"/>
        <dbReference type="ChEBI" id="CHEBI:57844"/>
        <dbReference type="ChEBI" id="CHEBI:58140"/>
        <dbReference type="ChEBI" id="CHEBI:58199"/>
        <dbReference type="ChEBI" id="CHEBI:58207"/>
        <dbReference type="EC" id="2.1.1.14"/>
    </reaction>
</comment>
<comment type="cofactor">
    <cofactor evidence="1">
        <name>Zn(2+)</name>
        <dbReference type="ChEBI" id="CHEBI:29105"/>
    </cofactor>
    <text evidence="1">Binds 1 zinc ion per subunit.</text>
</comment>
<comment type="pathway">
    <text evidence="1">Amino-acid biosynthesis; L-methionine biosynthesis via de novo pathway; L-methionine from L-homocysteine (MetE route): step 1/1.</text>
</comment>
<comment type="similarity">
    <text evidence="1">Belongs to the vitamin-B12 independent methionine synthase family.</text>
</comment>
<evidence type="ECO:0000255" key="1">
    <source>
        <dbReference type="HAMAP-Rule" id="MF_00172"/>
    </source>
</evidence>
<accession>Q7VVU3</accession>
<organism>
    <name type="scientific">Bordetella pertussis (strain Tohama I / ATCC BAA-589 / NCTC 13251)</name>
    <dbReference type="NCBI Taxonomy" id="257313"/>
    <lineage>
        <taxon>Bacteria</taxon>
        <taxon>Pseudomonadati</taxon>
        <taxon>Pseudomonadota</taxon>
        <taxon>Betaproteobacteria</taxon>
        <taxon>Burkholderiales</taxon>
        <taxon>Alcaligenaceae</taxon>
        <taxon>Bordetella</taxon>
    </lineage>
</organism>